<keyword id="KW-0450">Lipoyl</keyword>
<keyword id="KW-1185">Reference proteome</keyword>
<name>GCSH_MYCA9</name>
<protein>
    <recommendedName>
        <fullName evidence="1">Glycine cleavage system H protein</fullName>
    </recommendedName>
</protein>
<evidence type="ECO:0000255" key="1">
    <source>
        <dbReference type="HAMAP-Rule" id="MF_00272"/>
    </source>
</evidence>
<evidence type="ECO:0000255" key="2">
    <source>
        <dbReference type="PROSITE-ProRule" id="PRU01066"/>
    </source>
</evidence>
<dbReference type="EMBL" id="CU458896">
    <property type="protein sequence ID" value="CAM62483.1"/>
    <property type="molecule type" value="Genomic_DNA"/>
</dbReference>
<dbReference type="RefSeq" id="WP_005079361.1">
    <property type="nucleotide sequence ID" value="NZ_MLCG01000006.1"/>
</dbReference>
<dbReference type="SMR" id="B1MB62"/>
<dbReference type="GeneID" id="93379341"/>
<dbReference type="KEGG" id="mab:MAB_2402"/>
<dbReference type="Proteomes" id="UP000007137">
    <property type="component" value="Chromosome"/>
</dbReference>
<dbReference type="GO" id="GO:0005829">
    <property type="term" value="C:cytosol"/>
    <property type="evidence" value="ECO:0007669"/>
    <property type="project" value="TreeGrafter"/>
</dbReference>
<dbReference type="GO" id="GO:0005960">
    <property type="term" value="C:glycine cleavage complex"/>
    <property type="evidence" value="ECO:0007669"/>
    <property type="project" value="InterPro"/>
</dbReference>
<dbReference type="GO" id="GO:0019464">
    <property type="term" value="P:glycine decarboxylation via glycine cleavage system"/>
    <property type="evidence" value="ECO:0007669"/>
    <property type="project" value="UniProtKB-UniRule"/>
</dbReference>
<dbReference type="CDD" id="cd06848">
    <property type="entry name" value="GCS_H"/>
    <property type="match status" value="1"/>
</dbReference>
<dbReference type="Gene3D" id="2.40.50.100">
    <property type="match status" value="1"/>
</dbReference>
<dbReference type="HAMAP" id="MF_00272">
    <property type="entry name" value="GcvH"/>
    <property type="match status" value="1"/>
</dbReference>
<dbReference type="InterPro" id="IPR000089">
    <property type="entry name" value="Biotin_lipoyl"/>
</dbReference>
<dbReference type="InterPro" id="IPR002930">
    <property type="entry name" value="GCV_H"/>
</dbReference>
<dbReference type="InterPro" id="IPR033753">
    <property type="entry name" value="GCV_H/Fam206"/>
</dbReference>
<dbReference type="InterPro" id="IPR017453">
    <property type="entry name" value="GCV_H_sub"/>
</dbReference>
<dbReference type="InterPro" id="IPR011053">
    <property type="entry name" value="Single_hybrid_motif"/>
</dbReference>
<dbReference type="NCBIfam" id="TIGR00527">
    <property type="entry name" value="gcvH"/>
    <property type="match status" value="1"/>
</dbReference>
<dbReference type="NCBIfam" id="NF002270">
    <property type="entry name" value="PRK01202.1"/>
    <property type="match status" value="1"/>
</dbReference>
<dbReference type="PANTHER" id="PTHR11715">
    <property type="entry name" value="GLYCINE CLEAVAGE SYSTEM H PROTEIN"/>
    <property type="match status" value="1"/>
</dbReference>
<dbReference type="PANTHER" id="PTHR11715:SF3">
    <property type="entry name" value="GLYCINE CLEAVAGE SYSTEM H PROTEIN-RELATED"/>
    <property type="match status" value="1"/>
</dbReference>
<dbReference type="Pfam" id="PF01597">
    <property type="entry name" value="GCV_H"/>
    <property type="match status" value="1"/>
</dbReference>
<dbReference type="SUPFAM" id="SSF51230">
    <property type="entry name" value="Single hybrid motif"/>
    <property type="match status" value="1"/>
</dbReference>
<dbReference type="PROSITE" id="PS50968">
    <property type="entry name" value="BIOTINYL_LIPOYL"/>
    <property type="match status" value="1"/>
</dbReference>
<sequence>MTEIPADLHYTEEHEWVRRTGDTTVRIGITDYAQSQLGDVVFVQLPDVGSELTAGSTFGEVESTKSVSDLFAPITAKVIAANGDLDSDPQLVNSDPYGEGWLVDLEAASAADLDAALNDLLDASGYGDATD</sequence>
<reference key="1">
    <citation type="journal article" date="2009" name="PLoS ONE">
        <title>Non mycobacterial virulence genes in the genome of the emerging pathogen Mycobacterium abscessus.</title>
        <authorList>
            <person name="Ripoll F."/>
            <person name="Pasek S."/>
            <person name="Schenowitz C."/>
            <person name="Dossat C."/>
            <person name="Barbe V."/>
            <person name="Rottman M."/>
            <person name="Macheras E."/>
            <person name="Heym B."/>
            <person name="Herrmann J.L."/>
            <person name="Daffe M."/>
            <person name="Brosch R."/>
            <person name="Risler J.L."/>
            <person name="Gaillard J.L."/>
        </authorList>
    </citation>
    <scope>NUCLEOTIDE SEQUENCE [LARGE SCALE GENOMIC DNA]</scope>
    <source>
        <strain>ATCC 19977 / DSM 44196 / CCUG 20993 / CIP 104536 / JCM 13569 / NCTC 13031 / TMC 1543 / L948</strain>
    </source>
</reference>
<feature type="chain" id="PRO_1000114531" description="Glycine cleavage system H protein">
    <location>
        <begin position="1"/>
        <end position="131"/>
    </location>
</feature>
<feature type="domain" description="Lipoyl-binding" evidence="2">
    <location>
        <begin position="24"/>
        <end position="106"/>
    </location>
</feature>
<feature type="modified residue" description="N6-lipoyllysine" evidence="1">
    <location>
        <position position="65"/>
    </location>
</feature>
<accession>B1MB62</accession>
<organism>
    <name type="scientific">Mycobacteroides abscessus (strain ATCC 19977 / DSM 44196 / CCUG 20993 / CIP 104536 / JCM 13569 / NCTC 13031 / TMC 1543 / L948)</name>
    <name type="common">Mycobacterium abscessus</name>
    <dbReference type="NCBI Taxonomy" id="561007"/>
    <lineage>
        <taxon>Bacteria</taxon>
        <taxon>Bacillati</taxon>
        <taxon>Actinomycetota</taxon>
        <taxon>Actinomycetes</taxon>
        <taxon>Mycobacteriales</taxon>
        <taxon>Mycobacteriaceae</taxon>
        <taxon>Mycobacteroides</taxon>
        <taxon>Mycobacteroides abscessus</taxon>
    </lineage>
</organism>
<comment type="function">
    <text evidence="1">The glycine cleavage system catalyzes the degradation of glycine. The H protein shuttles the methylamine group of glycine from the P protein to the T protein.</text>
</comment>
<comment type="cofactor">
    <cofactor evidence="1">
        <name>(R)-lipoate</name>
        <dbReference type="ChEBI" id="CHEBI:83088"/>
    </cofactor>
    <text evidence="1">Binds 1 lipoyl cofactor covalently.</text>
</comment>
<comment type="subunit">
    <text evidence="1">The glycine cleavage system is composed of four proteins: P, T, L and H.</text>
</comment>
<comment type="similarity">
    <text evidence="1">Belongs to the GcvH family.</text>
</comment>
<proteinExistence type="inferred from homology"/>
<gene>
    <name evidence="1" type="primary">gcvH</name>
    <name type="ordered locus">MAB_2402</name>
</gene>